<evidence type="ECO:0000250" key="1"/>
<evidence type="ECO:0000305" key="2"/>
<protein>
    <recommendedName>
        <fullName evidence="2">Small ribosomal subunit protein uS7c</fullName>
    </recommendedName>
    <alternativeName>
        <fullName>30S ribosomal protein S7, chloroplastic</fullName>
    </alternativeName>
</protein>
<dbReference type="EMBL" id="AF137379">
    <property type="protein sequence ID" value="AAD54820.1"/>
    <property type="molecule type" value="Genomic_DNA"/>
</dbReference>
<dbReference type="RefSeq" id="NP_050849.1">
    <property type="nucleotide sequence ID" value="NC_000927.1"/>
</dbReference>
<dbReference type="SMR" id="Q9TKZ6"/>
<dbReference type="GeneID" id="801981"/>
<dbReference type="GO" id="GO:0009507">
    <property type="term" value="C:chloroplast"/>
    <property type="evidence" value="ECO:0007669"/>
    <property type="project" value="UniProtKB-SubCell"/>
</dbReference>
<dbReference type="GO" id="GO:0015935">
    <property type="term" value="C:small ribosomal subunit"/>
    <property type="evidence" value="ECO:0007669"/>
    <property type="project" value="InterPro"/>
</dbReference>
<dbReference type="GO" id="GO:0019843">
    <property type="term" value="F:rRNA binding"/>
    <property type="evidence" value="ECO:0007669"/>
    <property type="project" value="UniProtKB-UniRule"/>
</dbReference>
<dbReference type="GO" id="GO:0003735">
    <property type="term" value="F:structural constituent of ribosome"/>
    <property type="evidence" value="ECO:0007669"/>
    <property type="project" value="InterPro"/>
</dbReference>
<dbReference type="GO" id="GO:0006412">
    <property type="term" value="P:translation"/>
    <property type="evidence" value="ECO:0007669"/>
    <property type="project" value="UniProtKB-UniRule"/>
</dbReference>
<dbReference type="CDD" id="cd14871">
    <property type="entry name" value="uS7_Chloroplast"/>
    <property type="match status" value="1"/>
</dbReference>
<dbReference type="FunFam" id="1.10.455.10:FF:000001">
    <property type="entry name" value="30S ribosomal protein S7"/>
    <property type="match status" value="1"/>
</dbReference>
<dbReference type="Gene3D" id="1.10.455.10">
    <property type="entry name" value="Ribosomal protein S7 domain"/>
    <property type="match status" value="1"/>
</dbReference>
<dbReference type="HAMAP" id="MF_00480_B">
    <property type="entry name" value="Ribosomal_uS7_B"/>
    <property type="match status" value="1"/>
</dbReference>
<dbReference type="InterPro" id="IPR000235">
    <property type="entry name" value="Ribosomal_uS7"/>
</dbReference>
<dbReference type="InterPro" id="IPR005717">
    <property type="entry name" value="Ribosomal_uS7_bac/org-type"/>
</dbReference>
<dbReference type="InterPro" id="IPR020606">
    <property type="entry name" value="Ribosomal_uS7_CS"/>
</dbReference>
<dbReference type="InterPro" id="IPR023798">
    <property type="entry name" value="Ribosomal_uS7_dom"/>
</dbReference>
<dbReference type="InterPro" id="IPR036823">
    <property type="entry name" value="Ribosomal_uS7_dom_sf"/>
</dbReference>
<dbReference type="NCBIfam" id="TIGR01029">
    <property type="entry name" value="rpsG_bact"/>
    <property type="match status" value="1"/>
</dbReference>
<dbReference type="PANTHER" id="PTHR11205">
    <property type="entry name" value="RIBOSOMAL PROTEIN S7"/>
    <property type="match status" value="1"/>
</dbReference>
<dbReference type="Pfam" id="PF00177">
    <property type="entry name" value="Ribosomal_S7"/>
    <property type="match status" value="1"/>
</dbReference>
<dbReference type="PIRSF" id="PIRSF002122">
    <property type="entry name" value="RPS7p_RPS7a_RPS5e_RPS7o"/>
    <property type="match status" value="1"/>
</dbReference>
<dbReference type="SUPFAM" id="SSF47973">
    <property type="entry name" value="Ribosomal protein S7"/>
    <property type="match status" value="1"/>
</dbReference>
<dbReference type="PROSITE" id="PS00052">
    <property type="entry name" value="RIBOSOMAL_S7"/>
    <property type="match status" value="1"/>
</dbReference>
<accession>Q9TKZ6</accession>
<reference key="1">
    <citation type="journal article" date="1999" name="Proc. Natl. Acad. Sci. U.S.A.">
        <title>The complete chloroplast DNA sequence of the green alga Nephroselmis olivacea: insights into the architecture of ancestral chloroplast genomes.</title>
        <authorList>
            <person name="Turmel M."/>
            <person name="Otis C."/>
            <person name="Lemieux C."/>
        </authorList>
    </citation>
    <scope>NUCLEOTIDE SEQUENCE [LARGE SCALE GENOMIC DNA]</scope>
    <source>
        <strain>NIES-484 / S-N-5-8</strain>
    </source>
</reference>
<geneLocation type="chloroplast"/>
<keyword id="KW-0150">Chloroplast</keyword>
<keyword id="KW-0934">Plastid</keyword>
<keyword id="KW-0687">Ribonucleoprotein</keyword>
<keyword id="KW-0689">Ribosomal protein</keyword>
<keyword id="KW-0694">RNA-binding</keyword>
<keyword id="KW-0699">rRNA-binding</keyword>
<organism>
    <name type="scientific">Nephroselmis olivacea</name>
    <name type="common">Green alga</name>
    <dbReference type="NCBI Taxonomy" id="31312"/>
    <lineage>
        <taxon>Eukaryota</taxon>
        <taxon>Viridiplantae</taxon>
        <taxon>Chlorophyta</taxon>
        <taxon>Nephroselmidophyceae</taxon>
        <taxon>Nephroselmidales</taxon>
        <taxon>Nephroselmidaceae</taxon>
        <taxon>Nephroselmis</taxon>
    </lineage>
</organism>
<feature type="chain" id="PRO_0000124478" description="Small ribosomal subunit protein uS7c">
    <location>
        <begin position="1"/>
        <end position="156"/>
    </location>
</feature>
<sequence length="156" mass="17812">MSRRNTAVKRSISSDPVYNSQLIHMMISHILKEGKKALAYRLMYDAMKRIEKTTQQDPILVVERAVRNATPTIEVKARRMGGSIYQVPLEVKPERGTALALRWILLAARNRTGRDMVAKLSNELMDASNRIGNAVRKRDEMHRMAEANKAFAHIRV</sequence>
<comment type="function">
    <text evidence="1">One of the primary rRNA binding proteins, it binds directly to 16S rRNA where it nucleates assembly of the head domain of the 30S subunit.</text>
</comment>
<comment type="subunit">
    <text>Part of the 30S ribosomal subunit.</text>
</comment>
<comment type="subcellular location">
    <subcellularLocation>
        <location>Plastid</location>
        <location>Chloroplast</location>
    </subcellularLocation>
</comment>
<comment type="similarity">
    <text evidence="2">Belongs to the universal ribosomal protein uS7 family.</text>
</comment>
<proteinExistence type="inferred from homology"/>
<gene>
    <name type="primary">rps7</name>
</gene>
<name>RR7_NEPOL</name>